<feature type="chain" id="PRO_0000206640" description="X-linked retinitis pigmentosa GTPase regulator homolog">
    <location>
        <begin position="1"/>
        <end position="1386"/>
    </location>
</feature>
<feature type="repeat" description="RCC1 1">
    <location>
        <begin position="737"/>
        <end position="787"/>
    </location>
</feature>
<feature type="repeat" description="RCC1 2">
    <location>
        <begin position="788"/>
        <end position="838"/>
    </location>
</feature>
<feature type="repeat" description="RCC1 3">
    <location>
        <begin position="839"/>
        <end position="891"/>
    </location>
</feature>
<feature type="repeat" description="RCC1 4">
    <location>
        <begin position="893"/>
        <end position="943"/>
    </location>
</feature>
<feature type="repeat" description="RCC1 5">
    <location>
        <begin position="1034"/>
        <end position="1085"/>
    </location>
</feature>
<feature type="repeat" description="RCC1 6">
    <location>
        <begin position="1087"/>
        <end position="1139"/>
    </location>
</feature>
<feature type="region of interest" description="Disordered" evidence="1">
    <location>
        <begin position="1"/>
        <end position="25"/>
    </location>
</feature>
<feature type="region of interest" description="Disordered" evidence="1">
    <location>
        <begin position="37"/>
        <end position="56"/>
    </location>
</feature>
<feature type="region of interest" description="Disordered" evidence="1">
    <location>
        <begin position="730"/>
        <end position="760"/>
    </location>
</feature>
<feature type="region of interest" description="Disordered" evidence="1">
    <location>
        <begin position="972"/>
        <end position="994"/>
    </location>
</feature>
<feature type="compositionally biased region" description="Low complexity" evidence="1">
    <location>
        <begin position="9"/>
        <end position="25"/>
    </location>
</feature>
<feature type="compositionally biased region" description="Basic residues" evidence="1">
    <location>
        <begin position="45"/>
        <end position="56"/>
    </location>
</feature>
<evidence type="ECO:0000256" key="1">
    <source>
        <dbReference type="SAM" id="MobiDB-lite"/>
    </source>
</evidence>
<evidence type="ECO:0000269" key="2">
    <source>
    </source>
</evidence>
<evidence type="ECO:0000269" key="3">
    <source>
    </source>
</evidence>
<evidence type="ECO:0000305" key="4"/>
<proteinExistence type="evidence at protein level"/>
<organism>
    <name type="scientific">Caenorhabditis elegans</name>
    <dbReference type="NCBI Taxonomy" id="6239"/>
    <lineage>
        <taxon>Eukaryota</taxon>
        <taxon>Metazoa</taxon>
        <taxon>Ecdysozoa</taxon>
        <taxon>Nematoda</taxon>
        <taxon>Chromadorea</taxon>
        <taxon>Rhabditida</taxon>
        <taxon>Rhabditina</taxon>
        <taxon>Rhabditomorpha</taxon>
        <taxon>Rhabditoidea</taxon>
        <taxon>Rhabditidae</taxon>
        <taxon>Peloderinae</taxon>
        <taxon>Caenorhabditis</taxon>
    </lineage>
</organism>
<protein>
    <recommendedName>
        <fullName>X-linked retinitis pigmentosa GTPase regulator homolog</fullName>
    </recommendedName>
    <alternativeName>
        <fullName>Gut granule loss protein 4</fullName>
    </alternativeName>
</protein>
<comment type="function">
    <text evidence="2 3">Could be a guanine-nucleotide releasing factor for glo-1 (PubMed:15843430). May play a role in gut granule biogenesis (PubMed:15843430). Regulates axon termination in PLM and ALM neurons (PubMed:21968191).</text>
</comment>
<comment type="disruption phenotype">
    <text evidence="2">Worms exhibit lack of intestinal gut granules.</text>
</comment>
<dbReference type="EMBL" id="FO081074">
    <property type="protein sequence ID" value="CCD68933.2"/>
    <property type="molecule type" value="Genomic_DNA"/>
</dbReference>
<dbReference type="PIR" id="T28816">
    <property type="entry name" value="T28816"/>
</dbReference>
<dbReference type="PIR" id="T28817">
    <property type="entry name" value="T28817"/>
</dbReference>
<dbReference type="RefSeq" id="NP_505392.3">
    <property type="nucleotide sequence ID" value="NM_072991.5"/>
</dbReference>
<dbReference type="SMR" id="Q5DX34"/>
<dbReference type="BioGRID" id="44344">
    <property type="interactions" value="3"/>
</dbReference>
<dbReference type="FunCoup" id="Q5DX34">
    <property type="interactions" value="263"/>
</dbReference>
<dbReference type="STRING" id="6239.F07C3.4.1"/>
<dbReference type="PaxDb" id="6239-F07C3.4"/>
<dbReference type="PeptideAtlas" id="Q5DX34"/>
<dbReference type="EnsemblMetazoa" id="F07C3.4.1">
    <property type="protein sequence ID" value="F07C3.4.1"/>
    <property type="gene ID" value="WBGene00017195"/>
</dbReference>
<dbReference type="GeneID" id="179306"/>
<dbReference type="KEGG" id="cel:CELE_F07C3.4"/>
<dbReference type="UCSC" id="F07C3.4">
    <property type="organism name" value="c. elegans"/>
</dbReference>
<dbReference type="AGR" id="WB:WBGene00017195"/>
<dbReference type="CTD" id="179306"/>
<dbReference type="WormBase" id="F07C3.4">
    <property type="protein sequence ID" value="CE47730"/>
    <property type="gene ID" value="WBGene00017195"/>
    <property type="gene designation" value="glo-4"/>
</dbReference>
<dbReference type="eggNOG" id="KOG1426">
    <property type="taxonomic scope" value="Eukaryota"/>
</dbReference>
<dbReference type="HOGENOM" id="CLU_260451_0_0_1"/>
<dbReference type="InParanoid" id="Q5DX34"/>
<dbReference type="OMA" id="MANHEDV"/>
<dbReference type="OrthoDB" id="10256179at2759"/>
<dbReference type="Reactome" id="R-CEL-1169408">
    <property type="pathway name" value="ISG15 antiviral mechanism"/>
</dbReference>
<dbReference type="Reactome" id="R-CEL-936440">
    <property type="pathway name" value="Negative regulators of DDX58/IFIH1 signaling"/>
</dbReference>
<dbReference type="Reactome" id="R-CEL-983168">
    <property type="pathway name" value="Antigen processing: Ubiquitination &amp; Proteasome degradation"/>
</dbReference>
<dbReference type="Reactome" id="R-CEL-9833482">
    <property type="pathway name" value="PKR-mediated signaling"/>
</dbReference>
<dbReference type="Reactome" id="R-CEL-9909505">
    <property type="pathway name" value="Modulation of host responses by IFN-stimulated genes"/>
</dbReference>
<dbReference type="PRO" id="PR:Q5DX34"/>
<dbReference type="Proteomes" id="UP000001940">
    <property type="component" value="Chromosome V"/>
</dbReference>
<dbReference type="Bgee" id="WBGene00017195">
    <property type="expression patterns" value="Expressed in material anatomical entity and 5 other cell types or tissues"/>
</dbReference>
<dbReference type="GO" id="GO:0030424">
    <property type="term" value="C:axon"/>
    <property type="evidence" value="ECO:0000314"/>
    <property type="project" value="WormBase"/>
</dbReference>
<dbReference type="GO" id="GO:0005737">
    <property type="term" value="C:cytoplasm"/>
    <property type="evidence" value="ECO:0000318"/>
    <property type="project" value="GO_Central"/>
</dbReference>
<dbReference type="GO" id="GO:0045202">
    <property type="term" value="C:synapse"/>
    <property type="evidence" value="ECO:0000314"/>
    <property type="project" value="WormBase"/>
</dbReference>
<dbReference type="GO" id="GO:0005085">
    <property type="term" value="F:guanyl-nucleotide exchange factor activity"/>
    <property type="evidence" value="ECO:0007669"/>
    <property type="project" value="UniProtKB-KW"/>
</dbReference>
<dbReference type="GO" id="GO:0061630">
    <property type="term" value="F:ubiquitin protein ligase activity"/>
    <property type="evidence" value="ECO:0000318"/>
    <property type="project" value="GO_Central"/>
</dbReference>
<dbReference type="GO" id="GO:0030517">
    <property type="term" value="P:negative regulation of axon extension"/>
    <property type="evidence" value="ECO:0000316"/>
    <property type="project" value="WormBase"/>
</dbReference>
<dbReference type="GO" id="GO:0016567">
    <property type="term" value="P:protein ubiquitination"/>
    <property type="evidence" value="ECO:0000318"/>
    <property type="project" value="GO_Central"/>
</dbReference>
<dbReference type="GO" id="GO:0006511">
    <property type="term" value="P:ubiquitin-dependent protein catabolic process"/>
    <property type="evidence" value="ECO:0000318"/>
    <property type="project" value="GO_Central"/>
</dbReference>
<dbReference type="Gene3D" id="2.130.10.30">
    <property type="entry name" value="Regulator of chromosome condensation 1/beta-lactamase-inhibitor protein II"/>
    <property type="match status" value="2"/>
</dbReference>
<dbReference type="InterPro" id="IPR051553">
    <property type="entry name" value="Ran_GTPase-activating"/>
</dbReference>
<dbReference type="InterPro" id="IPR009091">
    <property type="entry name" value="RCC1/BLIP-II"/>
</dbReference>
<dbReference type="InterPro" id="IPR000408">
    <property type="entry name" value="Reg_chr_condens"/>
</dbReference>
<dbReference type="PANTHER" id="PTHR45982">
    <property type="entry name" value="REGULATOR OF CHROMOSOME CONDENSATION"/>
    <property type="match status" value="1"/>
</dbReference>
<dbReference type="PANTHER" id="PTHR45982:SF1">
    <property type="entry name" value="REGULATOR OF CHROMOSOME CONDENSATION"/>
    <property type="match status" value="1"/>
</dbReference>
<dbReference type="Pfam" id="PF13540">
    <property type="entry name" value="RCC1_2"/>
    <property type="match status" value="1"/>
</dbReference>
<dbReference type="Pfam" id="PF25390">
    <property type="entry name" value="WD40_RLD"/>
    <property type="match status" value="1"/>
</dbReference>
<dbReference type="PRINTS" id="PR00633">
    <property type="entry name" value="RCCNDNSATION"/>
</dbReference>
<dbReference type="SUPFAM" id="SSF50985">
    <property type="entry name" value="RCC1/BLIP-II"/>
    <property type="match status" value="1"/>
</dbReference>
<dbReference type="PROSITE" id="PS00626">
    <property type="entry name" value="RCC1_2"/>
    <property type="match status" value="3"/>
</dbReference>
<dbReference type="PROSITE" id="PS50012">
    <property type="entry name" value="RCC1_3"/>
    <property type="match status" value="4"/>
</dbReference>
<keyword id="KW-0903">Direct protein sequencing</keyword>
<keyword id="KW-0344">Guanine-nucleotide releasing factor</keyword>
<keyword id="KW-1185">Reference proteome</keyword>
<keyword id="KW-0677">Repeat</keyword>
<name>RPGRH_CAEEL</name>
<sequence length="1386" mass="152893">MFFKRSTNSRKTSANSSSDTSTSSESLLLPLLNNTKAGARSQKGSVHRQSGKKARRKMMENPYVCSLELDELSADDSIIDYSVFSDDSFLLILLLTSKGDVQAYLETSRDTKPRKNVVNIKTACSLNVSPVTVCIGSQAAFAIFGLADGNLLVTPIRLLIDVTWGGSSWATTTVIDLSLPTVDPCLATPTCTKCFVSNFPPCTMAVVANKAGNILLVDLHLRKCVSELKAPQSLHQIDILLDENSIELLVTGFTGAQWIIPIERSGKGFREVLTTCVPSDLTVLEPATMQFFAADSCGVVALDTTESIVEVYNTFHSLAHSSKRTFKVPPETWMVHAGDNMLFTVSNDNEIRSALHFGFMSSRLEYTLVRTSTNWRPLGIVAMPSRPHKLAGIFVVNERGLVRVEQSTALNLTKIASEFFFRLSPLQLNSKSVAQVANACRIDTAEFQSALIPNLLSTRKNRQLTNKELSQIYSIAKAINLSMSDLLKAFENESIGEQLLPEVLNTIQTNPAKHDNLMQRVVEMFVKRSLSAEGNMDKIREYDAELSNFLARHEHLHKGSVDCAKAGMWKCTQTLVRRDVHETKSIDTSTEVLLYIIKNRLQIWNEANSTDRLQIMSLVCHLDWSKLADADGARVCAILSAWQRDISLPSYHEMCLRIAITNSDRFPRPCQILSLVSSIHILSEKKISNHANLPNFLPLAGGNNCGATITEDDRLMIWGNFTNAQQRMEMPQMNAKSKRSDSVTNGAPTLPPPAPKPEQHLPRVLEYPGGRPRAIACGAEHILVLSSSGQLSAWGGNRFGQCGVGHSFRIANLHQVDGDWPAIEKIACGQFHSAFICSDGSLWTFGWGVWGQLGHGGRNNSNQLVPTRVNGLICKVTQIACGRAHTVVLTDTGRVLVCGSGSYGQMGVDDDIKKVFAFTPLPLGPLRVRDIATHYYHSICITEDNRVFEWGRNPQELKMRMFVMKKIRSAQLKNTEDPSSPSPSTNGSTPRVNLNLPAEIPREDLGLREVKHFLDGNIVSVACGLSHSALITSEGTLYTWGKGLDYQLGHGNKNERMEPHQVFEPNGAKWVNVSLGNNHTIASTDDGSVFAWGKNDFGQCGVLTKKNGNSADVTKKFFFQARDGRRFMPNVDESQFVQKPGLIPDVRVRNLNEDGNEGVDKEEIVDRLKASDVNVVQAVSKHLYSPIEGKCNGSIIEDEPRNGKIQKQNKYDGEDGPLCTTTALVHLIAGDVKRAIRMIEWLKTDSSTCEKSLMVLSSLVWEVMANHEDVQSREALSAAFRHVPMSDSMRKGKQIAQLWPAVWNDERVQSSLSIDEKIAMLDGFTSASKPVSCPTIPSSSLEVSSKIRVYAQCAHAEPAAVGSPPECSTCLDEWTEKVRHTLGTQL</sequence>
<gene>
    <name type="primary">glo-4</name>
    <name type="ORF">F07C3.4</name>
</gene>
<reference evidence="4" key="1">
    <citation type="journal article" date="1998" name="Science">
        <title>Genome sequence of the nematode C. elegans: a platform for investigating biology.</title>
        <authorList>
            <consortium name="The C. elegans sequencing consortium"/>
        </authorList>
    </citation>
    <scope>NUCLEOTIDE SEQUENCE [LARGE SCALE GENOMIC DNA]</scope>
    <source>
        <strain>Bristol N2</strain>
    </source>
</reference>
<reference evidence="4" key="2">
    <citation type="submission" date="2005-02" db="UniProtKB">
        <authorList>
            <person name="Bienvenut W.V."/>
        </authorList>
    </citation>
    <scope>PROTEIN SEQUENCE OF 99-109; 211-222; 364-370; 390-399; 404-431; 468-477; 541-552; 585-598; 601-612; 859-868; 915-927 AND 1308-1317</scope>
    <scope>IDENTIFICATION BY MASS SPECTROMETRY</scope>
</reference>
<reference evidence="4" key="3">
    <citation type="journal article" date="2000" name="Hum. Mol. Genet.">
        <title>A role for Caenorhabditis elegans in understanding the function and interactions of human disease genes.</title>
        <authorList>
            <person name="Culetto E."/>
            <person name="Sattelle D.B."/>
        </authorList>
    </citation>
    <scope>IDENTIFICATION</scope>
</reference>
<reference key="4">
    <citation type="journal article" date="2005" name="Mol. Biol. Cell">
        <title>Genetic analysis of lysosomal trafficking in Caenorhabditis elegans.</title>
        <authorList>
            <person name="Hermann G.J."/>
            <person name="Schroeder L.K."/>
            <person name="Hieb C.A."/>
            <person name="Kershner A.M."/>
            <person name="Rabbitts B.M."/>
            <person name="Fonarev P."/>
            <person name="Grant B.D."/>
            <person name="Priess J.R."/>
        </authorList>
    </citation>
    <scope>FUNCTION</scope>
    <scope>DISRUPTION PHENOTYPE</scope>
</reference>
<reference key="5">
    <citation type="journal article" date="2011" name="Genetics">
        <title>PPM-1, a PP2Calpha/beta phosphatase, regulates axon termination and synapse formation in Caenorhabditis elegans.</title>
        <authorList>
            <person name="Tulgren E.D."/>
            <person name="Baker S.T."/>
            <person name="Rapp L."/>
            <person name="Gurney A.M."/>
            <person name="Grill B."/>
        </authorList>
    </citation>
    <scope>FUNCTION</scope>
</reference>
<accession>Q5DX34</accession>